<accession>P43755</accession>
<comment type="function">
    <text evidence="1">Provides the precursors necessary for DNA synthesis. Catalyzes the biosynthesis of deoxyribonucleotides from the corresponding ribonucleotides (By similarity).</text>
</comment>
<comment type="catalytic activity">
    <reaction evidence="2">
        <text>a 2'-deoxyribonucleoside 5'-diphosphate + [thioredoxin]-disulfide + H2O = a ribonucleoside 5'-diphosphate + [thioredoxin]-dithiol</text>
        <dbReference type="Rhea" id="RHEA:23252"/>
        <dbReference type="Rhea" id="RHEA-COMP:10698"/>
        <dbReference type="Rhea" id="RHEA-COMP:10700"/>
        <dbReference type="ChEBI" id="CHEBI:15377"/>
        <dbReference type="ChEBI" id="CHEBI:29950"/>
        <dbReference type="ChEBI" id="CHEBI:50058"/>
        <dbReference type="ChEBI" id="CHEBI:57930"/>
        <dbReference type="ChEBI" id="CHEBI:73316"/>
        <dbReference type="EC" id="1.17.4.1"/>
    </reaction>
</comment>
<comment type="cofactor">
    <cofactor evidence="1">
        <name>Fe cation</name>
        <dbReference type="ChEBI" id="CHEBI:24875"/>
    </cofactor>
    <text evidence="1">Binds 2 iron ions per subunit.</text>
</comment>
<comment type="subunit">
    <text evidence="1">Tetramer of two alpha and two beta subunits.</text>
</comment>
<comment type="similarity">
    <text evidence="3">Belongs to the ribonucleoside diphosphate reductase small chain family.</text>
</comment>
<dbReference type="EC" id="1.17.4.1"/>
<dbReference type="EMBL" id="L42023">
    <property type="protein sequence ID" value="AAC23306.1"/>
    <property type="molecule type" value="Genomic_DNA"/>
</dbReference>
<dbReference type="PIR" id="C64135">
    <property type="entry name" value="C64135"/>
</dbReference>
<dbReference type="RefSeq" id="NP_439802.1">
    <property type="nucleotide sequence ID" value="NC_000907.1"/>
</dbReference>
<dbReference type="SMR" id="P43755"/>
<dbReference type="STRING" id="71421.HI_1660"/>
<dbReference type="EnsemblBacteria" id="AAC23306">
    <property type="protein sequence ID" value="AAC23306"/>
    <property type="gene ID" value="HI_1660"/>
</dbReference>
<dbReference type="KEGG" id="hin:HI_1660"/>
<dbReference type="PATRIC" id="fig|71421.8.peg.1738"/>
<dbReference type="eggNOG" id="COG0208">
    <property type="taxonomic scope" value="Bacteria"/>
</dbReference>
<dbReference type="HOGENOM" id="CLU_062403_0_0_6"/>
<dbReference type="OrthoDB" id="9765051at2"/>
<dbReference type="PhylomeDB" id="P43755"/>
<dbReference type="BioCyc" id="HINF71421:G1GJ1-1677-MONOMER"/>
<dbReference type="Proteomes" id="UP000000579">
    <property type="component" value="Chromosome"/>
</dbReference>
<dbReference type="GO" id="GO:0046872">
    <property type="term" value="F:metal ion binding"/>
    <property type="evidence" value="ECO:0007669"/>
    <property type="project" value="UniProtKB-KW"/>
</dbReference>
<dbReference type="GO" id="GO:0004748">
    <property type="term" value="F:ribonucleoside-diphosphate reductase activity, thioredoxin disulfide as acceptor"/>
    <property type="evidence" value="ECO:0007669"/>
    <property type="project" value="UniProtKB-EC"/>
</dbReference>
<dbReference type="GO" id="GO:0009263">
    <property type="term" value="P:deoxyribonucleotide biosynthetic process"/>
    <property type="evidence" value="ECO:0007669"/>
    <property type="project" value="UniProtKB-KW"/>
</dbReference>
<dbReference type="CDD" id="cd01049">
    <property type="entry name" value="RNRR2"/>
    <property type="match status" value="1"/>
</dbReference>
<dbReference type="FunFam" id="1.10.620.20:FF:000001">
    <property type="entry name" value="Ribonucleoside-diphosphate reductase 1 subunit beta"/>
    <property type="match status" value="1"/>
</dbReference>
<dbReference type="Gene3D" id="1.10.620.20">
    <property type="entry name" value="Ribonucleotide Reductase, subunit A"/>
    <property type="match status" value="1"/>
</dbReference>
<dbReference type="InterPro" id="IPR009078">
    <property type="entry name" value="Ferritin-like_SF"/>
</dbReference>
<dbReference type="InterPro" id="IPR012348">
    <property type="entry name" value="RNR-like"/>
</dbReference>
<dbReference type="InterPro" id="IPR033909">
    <property type="entry name" value="RNR_small"/>
</dbReference>
<dbReference type="InterPro" id="IPR030475">
    <property type="entry name" value="RNR_small_AS"/>
</dbReference>
<dbReference type="InterPro" id="IPR000358">
    <property type="entry name" value="RNR_small_fam"/>
</dbReference>
<dbReference type="NCBIfam" id="NF006576">
    <property type="entry name" value="PRK09101.1"/>
    <property type="match status" value="1"/>
</dbReference>
<dbReference type="PANTHER" id="PTHR23409">
    <property type="entry name" value="RIBONUCLEOSIDE-DIPHOSPHATE REDUCTASE SMALL CHAIN"/>
    <property type="match status" value="1"/>
</dbReference>
<dbReference type="PANTHER" id="PTHR23409:SF18">
    <property type="entry name" value="RIBONUCLEOSIDE-DIPHOSPHATE REDUCTASE SUBUNIT M2"/>
    <property type="match status" value="1"/>
</dbReference>
<dbReference type="Pfam" id="PF00268">
    <property type="entry name" value="Ribonuc_red_sm"/>
    <property type="match status" value="1"/>
</dbReference>
<dbReference type="SUPFAM" id="SSF47240">
    <property type="entry name" value="Ferritin-like"/>
    <property type="match status" value="1"/>
</dbReference>
<dbReference type="PROSITE" id="PS00368">
    <property type="entry name" value="RIBORED_SMALL"/>
    <property type="match status" value="1"/>
</dbReference>
<protein>
    <recommendedName>
        <fullName>Ribonucleoside-diphosphate reductase subunit beta</fullName>
        <ecNumber>1.17.4.1</ecNumber>
    </recommendedName>
    <alternativeName>
        <fullName>Ribonucleotide reductase small subunit</fullName>
    </alternativeName>
</protein>
<proteinExistence type="inferred from homology"/>
<sequence length="376" mass="43326">MAYTTFSQNKNDQLKEPMFFGQNVNVARYDQQKYETFEKLIEKQLSFFWRPEEVDVSQDRIDYAALPEHEKHIFISNLKYQTLLDSIQGRSPNVALLPLVSIPELETWIETWTFSETIHSRSYTHIIRNIVNDPSIVFDDIVTNEEIIKRAQDISSYYDDLIRDSQLYGLYGEGTYTVDGKECVVTLRSLKKQLYLCLMSVNALEAIRFYVSFACSFAFAERRLMEGNAKIIKFIARDEALHLTGTQHILNIMAAGQDDPEMAEIAEECKQEAYDLFVAAAEQEKAWADYLFKDGSMIGLNRDILVQYVEYITNIRMQAVGLPLPFQTRSNPIPWINAWLVSDNVQVAPQEVEVSSYLVGQIDSKVDTNDFDDFSL</sequence>
<keyword id="KW-0215">Deoxyribonucleotide synthesis</keyword>
<keyword id="KW-0408">Iron</keyword>
<keyword id="KW-0479">Metal-binding</keyword>
<keyword id="KW-0560">Oxidoreductase</keyword>
<keyword id="KW-1185">Reference proteome</keyword>
<organism>
    <name type="scientific">Haemophilus influenzae (strain ATCC 51907 / DSM 11121 / KW20 / Rd)</name>
    <dbReference type="NCBI Taxonomy" id="71421"/>
    <lineage>
        <taxon>Bacteria</taxon>
        <taxon>Pseudomonadati</taxon>
        <taxon>Pseudomonadota</taxon>
        <taxon>Gammaproteobacteria</taxon>
        <taxon>Pasteurellales</taxon>
        <taxon>Pasteurellaceae</taxon>
        <taxon>Haemophilus</taxon>
    </lineage>
</organism>
<evidence type="ECO:0000250" key="1"/>
<evidence type="ECO:0000255" key="2">
    <source>
        <dbReference type="PROSITE-ProRule" id="PRU10014"/>
    </source>
</evidence>
<evidence type="ECO:0000305" key="3"/>
<reference key="1">
    <citation type="journal article" date="1995" name="Science">
        <title>Whole-genome random sequencing and assembly of Haemophilus influenzae Rd.</title>
        <authorList>
            <person name="Fleischmann R.D."/>
            <person name="Adams M.D."/>
            <person name="White O."/>
            <person name="Clayton R.A."/>
            <person name="Kirkness E.F."/>
            <person name="Kerlavage A.R."/>
            <person name="Bult C.J."/>
            <person name="Tomb J.-F."/>
            <person name="Dougherty B.A."/>
            <person name="Merrick J.M."/>
            <person name="McKenney K."/>
            <person name="Sutton G.G."/>
            <person name="FitzHugh W."/>
            <person name="Fields C.A."/>
            <person name="Gocayne J.D."/>
            <person name="Scott J.D."/>
            <person name="Shirley R."/>
            <person name="Liu L.-I."/>
            <person name="Glodek A."/>
            <person name="Kelley J.M."/>
            <person name="Weidman J.F."/>
            <person name="Phillips C.A."/>
            <person name="Spriggs T."/>
            <person name="Hedblom E."/>
            <person name="Cotton M.D."/>
            <person name="Utterback T.R."/>
            <person name="Hanna M.C."/>
            <person name="Nguyen D.T."/>
            <person name="Saudek D.M."/>
            <person name="Brandon R.C."/>
            <person name="Fine L.D."/>
            <person name="Fritchman J.L."/>
            <person name="Fuhrmann J.L."/>
            <person name="Geoghagen N.S.M."/>
            <person name="Gnehm C.L."/>
            <person name="McDonald L.A."/>
            <person name="Small K.V."/>
            <person name="Fraser C.M."/>
            <person name="Smith H.O."/>
            <person name="Venter J.C."/>
        </authorList>
    </citation>
    <scope>NUCLEOTIDE SEQUENCE [LARGE SCALE GENOMIC DNA]</scope>
    <source>
        <strain>ATCC 51907 / DSM 11121 / KW20 / Rd</strain>
    </source>
</reference>
<name>RIR2_HAEIN</name>
<gene>
    <name type="primary">nrdB</name>
    <name type="ordered locus">HI_1660</name>
</gene>
<feature type="initiator methionine" description="Removed" evidence="1">
    <location>
        <position position="1"/>
    </location>
</feature>
<feature type="chain" id="PRO_0000190479" description="Ribonucleoside-diphosphate reductase subunit beta">
    <location>
        <begin position="2"/>
        <end position="376"/>
    </location>
</feature>
<feature type="active site" evidence="2">
    <location>
        <position position="123"/>
    </location>
</feature>
<feature type="binding site" evidence="2">
    <location>
        <position position="85"/>
    </location>
    <ligand>
        <name>Fe cation</name>
        <dbReference type="ChEBI" id="CHEBI:24875"/>
        <label>1</label>
    </ligand>
</feature>
<feature type="binding site" evidence="2">
    <location>
        <position position="116"/>
    </location>
    <ligand>
        <name>Fe cation</name>
        <dbReference type="ChEBI" id="CHEBI:24875"/>
        <label>1</label>
    </ligand>
</feature>
<feature type="binding site" evidence="1">
    <location>
        <position position="116"/>
    </location>
    <ligand>
        <name>Fe cation</name>
        <dbReference type="ChEBI" id="CHEBI:24875"/>
        <label>2</label>
    </ligand>
</feature>
<feature type="binding site" evidence="2">
    <location>
        <position position="119"/>
    </location>
    <ligand>
        <name>Fe cation</name>
        <dbReference type="ChEBI" id="CHEBI:24875"/>
        <label>1</label>
    </ligand>
</feature>
<feature type="binding site" evidence="1">
    <location>
        <position position="205"/>
    </location>
    <ligand>
        <name>Fe cation</name>
        <dbReference type="ChEBI" id="CHEBI:24875"/>
        <label>2</label>
    </ligand>
</feature>
<feature type="binding site" evidence="1">
    <location>
        <position position="239"/>
    </location>
    <ligand>
        <name>Fe cation</name>
        <dbReference type="ChEBI" id="CHEBI:24875"/>
        <label>2</label>
    </ligand>
</feature>
<feature type="binding site" evidence="1">
    <location>
        <position position="242"/>
    </location>
    <ligand>
        <name>Fe cation</name>
        <dbReference type="ChEBI" id="CHEBI:24875"/>
        <label>2</label>
    </ligand>
</feature>